<evidence type="ECO:0000255" key="1">
    <source>
        <dbReference type="HAMAP-Rule" id="MF_01820"/>
    </source>
</evidence>
<evidence type="ECO:0000255" key="2">
    <source>
        <dbReference type="PROSITE-ProRule" id="PRU01058"/>
    </source>
</evidence>
<feature type="chain" id="PRO_1000188034" description="Small ribosomal subunit biogenesis GTPase RsgA">
    <location>
        <begin position="1"/>
        <end position="293"/>
    </location>
</feature>
<feature type="domain" description="CP-type G" evidence="2">
    <location>
        <begin position="63"/>
        <end position="223"/>
    </location>
</feature>
<feature type="binding site" evidence="1">
    <location>
        <begin position="112"/>
        <end position="115"/>
    </location>
    <ligand>
        <name>GTP</name>
        <dbReference type="ChEBI" id="CHEBI:37565"/>
    </ligand>
</feature>
<feature type="binding site" evidence="1">
    <location>
        <begin position="166"/>
        <end position="174"/>
    </location>
    <ligand>
        <name>GTP</name>
        <dbReference type="ChEBI" id="CHEBI:37565"/>
    </ligand>
</feature>
<feature type="binding site" evidence="1">
    <location>
        <position position="247"/>
    </location>
    <ligand>
        <name>Zn(2+)</name>
        <dbReference type="ChEBI" id="CHEBI:29105"/>
    </ligand>
</feature>
<feature type="binding site" evidence="1">
    <location>
        <position position="252"/>
    </location>
    <ligand>
        <name>Zn(2+)</name>
        <dbReference type="ChEBI" id="CHEBI:29105"/>
    </ligand>
</feature>
<feature type="binding site" evidence="1">
    <location>
        <position position="254"/>
    </location>
    <ligand>
        <name>Zn(2+)</name>
        <dbReference type="ChEBI" id="CHEBI:29105"/>
    </ligand>
</feature>
<feature type="binding site" evidence="1">
    <location>
        <position position="260"/>
    </location>
    <ligand>
        <name>Zn(2+)</name>
        <dbReference type="ChEBI" id="CHEBI:29105"/>
    </ligand>
</feature>
<gene>
    <name evidence="1" type="primary">rsgA</name>
    <name type="ordered locus">ABC2314</name>
</gene>
<protein>
    <recommendedName>
        <fullName evidence="1">Small ribosomal subunit biogenesis GTPase RsgA</fullName>
        <ecNumber evidence="1">3.6.1.-</ecNumber>
    </recommendedName>
</protein>
<organism>
    <name type="scientific">Shouchella clausii (strain KSM-K16)</name>
    <name type="common">Alkalihalobacillus clausii</name>
    <dbReference type="NCBI Taxonomy" id="66692"/>
    <lineage>
        <taxon>Bacteria</taxon>
        <taxon>Bacillati</taxon>
        <taxon>Bacillota</taxon>
        <taxon>Bacilli</taxon>
        <taxon>Bacillales</taxon>
        <taxon>Bacillaceae</taxon>
        <taxon>Shouchella</taxon>
    </lineage>
</organism>
<reference key="1">
    <citation type="submission" date="2003-10" db="EMBL/GenBank/DDBJ databases">
        <title>The complete genome sequence of the alkaliphilic Bacillus clausii KSM-K16.</title>
        <authorList>
            <person name="Takaki Y."/>
            <person name="Kageyama Y."/>
            <person name="Shimamura S."/>
            <person name="Suzuki H."/>
            <person name="Nishi S."/>
            <person name="Hatada Y."/>
            <person name="Kawai S."/>
            <person name="Ito S."/>
            <person name="Horikoshi K."/>
        </authorList>
    </citation>
    <scope>NUCLEOTIDE SEQUENCE [LARGE SCALE GENOMIC DNA]</scope>
    <source>
        <strain>KSM-K16</strain>
    </source>
</reference>
<name>RSGA_SHOC1</name>
<keyword id="KW-0963">Cytoplasm</keyword>
<keyword id="KW-0342">GTP-binding</keyword>
<keyword id="KW-0378">Hydrolase</keyword>
<keyword id="KW-0479">Metal-binding</keyword>
<keyword id="KW-0547">Nucleotide-binding</keyword>
<keyword id="KW-1185">Reference proteome</keyword>
<keyword id="KW-0690">Ribosome biogenesis</keyword>
<keyword id="KW-0694">RNA-binding</keyword>
<keyword id="KW-0699">rRNA-binding</keyword>
<keyword id="KW-0862">Zinc</keyword>
<comment type="function">
    <text evidence="1">One of several proteins that assist in the late maturation steps of the functional core of the 30S ribosomal subunit. Helps release RbfA from mature subunits. May play a role in the assembly of ribosomal proteins into the subunit. Circularly permuted GTPase that catalyzes slow GTP hydrolysis, GTPase activity is stimulated by the 30S ribosomal subunit.</text>
</comment>
<comment type="cofactor">
    <cofactor evidence="1">
        <name>Zn(2+)</name>
        <dbReference type="ChEBI" id="CHEBI:29105"/>
    </cofactor>
    <text evidence="1">Binds 1 zinc ion per subunit.</text>
</comment>
<comment type="subunit">
    <text evidence="1">Monomer. Associates with 30S ribosomal subunit, binds 16S rRNA.</text>
</comment>
<comment type="subcellular location">
    <subcellularLocation>
        <location evidence="1">Cytoplasm</location>
    </subcellularLocation>
</comment>
<comment type="similarity">
    <text evidence="1">Belongs to the TRAFAC class YlqF/YawG GTPase family. RsgA subfamily.</text>
</comment>
<proteinExistence type="inferred from homology"/>
<sequence length="293" mass="33189">MPEGLIVKALSGFYYVQSEGALIQCRGRGVFRKRKQTPLVGDYVEFEAENETDGYVMAIKERKNQLNRPPIANVDQAILVFSAKEPDFHTLLLDRFLVHIEQHDIKPVLIISKTDLLEASERDALTRQVAMYEQIGYPVLYTSTKQADDPSELLPLLANQVSVIAGQSGVGKSSLLNALAPEAKIETNEISRHLGRGRHTTRHTELLPIGEGLVADTPGFSSLEFTDMEAEDLRFCFPEFLSLMDDCKFRGCLHDKEPKCAIKDAVETGEVDSFRYKHYLQFLHEIQDQKRRY</sequence>
<dbReference type="EC" id="3.6.1.-" evidence="1"/>
<dbReference type="EMBL" id="AP006627">
    <property type="protein sequence ID" value="BAD64849.1"/>
    <property type="molecule type" value="Genomic_DNA"/>
</dbReference>
<dbReference type="RefSeq" id="WP_011247157.1">
    <property type="nucleotide sequence ID" value="NC_006582.1"/>
</dbReference>
<dbReference type="SMR" id="Q5WFL1"/>
<dbReference type="STRING" id="66692.ABC2314"/>
<dbReference type="KEGG" id="bcl:ABC2314"/>
<dbReference type="eggNOG" id="COG1162">
    <property type="taxonomic scope" value="Bacteria"/>
</dbReference>
<dbReference type="HOGENOM" id="CLU_033617_2_1_9"/>
<dbReference type="OrthoDB" id="9809485at2"/>
<dbReference type="Proteomes" id="UP000001168">
    <property type="component" value="Chromosome"/>
</dbReference>
<dbReference type="GO" id="GO:0005737">
    <property type="term" value="C:cytoplasm"/>
    <property type="evidence" value="ECO:0007669"/>
    <property type="project" value="UniProtKB-SubCell"/>
</dbReference>
<dbReference type="GO" id="GO:0005525">
    <property type="term" value="F:GTP binding"/>
    <property type="evidence" value="ECO:0007669"/>
    <property type="project" value="UniProtKB-UniRule"/>
</dbReference>
<dbReference type="GO" id="GO:0003924">
    <property type="term" value="F:GTPase activity"/>
    <property type="evidence" value="ECO:0007669"/>
    <property type="project" value="UniProtKB-UniRule"/>
</dbReference>
<dbReference type="GO" id="GO:0046872">
    <property type="term" value="F:metal ion binding"/>
    <property type="evidence" value="ECO:0007669"/>
    <property type="project" value="UniProtKB-KW"/>
</dbReference>
<dbReference type="GO" id="GO:0019843">
    <property type="term" value="F:rRNA binding"/>
    <property type="evidence" value="ECO:0007669"/>
    <property type="project" value="UniProtKB-KW"/>
</dbReference>
<dbReference type="GO" id="GO:0042274">
    <property type="term" value="P:ribosomal small subunit biogenesis"/>
    <property type="evidence" value="ECO:0007669"/>
    <property type="project" value="UniProtKB-UniRule"/>
</dbReference>
<dbReference type="CDD" id="cd04466">
    <property type="entry name" value="S1_YloQ_GTPase"/>
    <property type="match status" value="1"/>
</dbReference>
<dbReference type="CDD" id="cd01854">
    <property type="entry name" value="YjeQ_EngC"/>
    <property type="match status" value="1"/>
</dbReference>
<dbReference type="Gene3D" id="2.40.50.140">
    <property type="entry name" value="Nucleic acid-binding proteins"/>
    <property type="match status" value="1"/>
</dbReference>
<dbReference type="Gene3D" id="3.40.50.300">
    <property type="entry name" value="P-loop containing nucleotide triphosphate hydrolases"/>
    <property type="match status" value="1"/>
</dbReference>
<dbReference type="Gene3D" id="1.10.40.50">
    <property type="entry name" value="Probable gtpase engc, domain 3"/>
    <property type="match status" value="1"/>
</dbReference>
<dbReference type="HAMAP" id="MF_01820">
    <property type="entry name" value="GTPase_RsgA"/>
    <property type="match status" value="1"/>
</dbReference>
<dbReference type="InterPro" id="IPR030378">
    <property type="entry name" value="G_CP_dom"/>
</dbReference>
<dbReference type="InterPro" id="IPR012340">
    <property type="entry name" value="NA-bd_OB-fold"/>
</dbReference>
<dbReference type="InterPro" id="IPR027417">
    <property type="entry name" value="P-loop_NTPase"/>
</dbReference>
<dbReference type="InterPro" id="IPR004881">
    <property type="entry name" value="Ribosome_biogen_GTPase_RsgA"/>
</dbReference>
<dbReference type="InterPro" id="IPR010914">
    <property type="entry name" value="RsgA_GTPase_dom"/>
</dbReference>
<dbReference type="InterPro" id="IPR031944">
    <property type="entry name" value="RsgA_N"/>
</dbReference>
<dbReference type="NCBIfam" id="TIGR00157">
    <property type="entry name" value="ribosome small subunit-dependent GTPase A"/>
    <property type="match status" value="1"/>
</dbReference>
<dbReference type="PANTHER" id="PTHR32120">
    <property type="entry name" value="SMALL RIBOSOMAL SUBUNIT BIOGENESIS GTPASE RSGA"/>
    <property type="match status" value="1"/>
</dbReference>
<dbReference type="PANTHER" id="PTHR32120:SF11">
    <property type="entry name" value="SMALL RIBOSOMAL SUBUNIT BIOGENESIS GTPASE RSGA 1, MITOCHONDRIAL-RELATED"/>
    <property type="match status" value="1"/>
</dbReference>
<dbReference type="Pfam" id="PF03193">
    <property type="entry name" value="RsgA_GTPase"/>
    <property type="match status" value="1"/>
</dbReference>
<dbReference type="Pfam" id="PF16745">
    <property type="entry name" value="RsgA_N"/>
    <property type="match status" value="1"/>
</dbReference>
<dbReference type="SUPFAM" id="SSF50249">
    <property type="entry name" value="Nucleic acid-binding proteins"/>
    <property type="match status" value="1"/>
</dbReference>
<dbReference type="SUPFAM" id="SSF52540">
    <property type="entry name" value="P-loop containing nucleoside triphosphate hydrolases"/>
    <property type="match status" value="1"/>
</dbReference>
<dbReference type="PROSITE" id="PS50936">
    <property type="entry name" value="ENGC_GTPASE"/>
    <property type="match status" value="1"/>
</dbReference>
<dbReference type="PROSITE" id="PS51721">
    <property type="entry name" value="G_CP"/>
    <property type="match status" value="1"/>
</dbReference>
<accession>Q5WFL1</accession>